<comment type="function">
    <text evidence="1">Cell wall formation. Catalyzes the addition of glutamate to the nucleotide precursor UDP-N-acetylmuramoyl-L-alanine (UMA).</text>
</comment>
<comment type="catalytic activity">
    <reaction evidence="1">
        <text>UDP-N-acetyl-alpha-D-muramoyl-L-alanine + D-glutamate + ATP = UDP-N-acetyl-alpha-D-muramoyl-L-alanyl-D-glutamate + ADP + phosphate + H(+)</text>
        <dbReference type="Rhea" id="RHEA:16429"/>
        <dbReference type="ChEBI" id="CHEBI:15378"/>
        <dbReference type="ChEBI" id="CHEBI:29986"/>
        <dbReference type="ChEBI" id="CHEBI:30616"/>
        <dbReference type="ChEBI" id="CHEBI:43474"/>
        <dbReference type="ChEBI" id="CHEBI:83898"/>
        <dbReference type="ChEBI" id="CHEBI:83900"/>
        <dbReference type="ChEBI" id="CHEBI:456216"/>
        <dbReference type="EC" id="6.3.2.9"/>
    </reaction>
</comment>
<comment type="pathway">
    <text evidence="1">Cell wall biogenesis; peptidoglycan biosynthesis.</text>
</comment>
<comment type="subcellular location">
    <subcellularLocation>
        <location evidence="1">Cytoplasm</location>
    </subcellularLocation>
</comment>
<comment type="similarity">
    <text evidence="1">Belongs to the MurCDEF family.</text>
</comment>
<reference key="1">
    <citation type="submission" date="2005-08" db="EMBL/GenBank/DDBJ databases">
        <title>Complete sequence of Synechococcus sp. CC9902.</title>
        <authorList>
            <person name="Copeland A."/>
            <person name="Lucas S."/>
            <person name="Lapidus A."/>
            <person name="Barry K."/>
            <person name="Detter J.C."/>
            <person name="Glavina T."/>
            <person name="Hammon N."/>
            <person name="Israni S."/>
            <person name="Pitluck S."/>
            <person name="Martinez M."/>
            <person name="Schmutz J."/>
            <person name="Larimer F."/>
            <person name="Land M."/>
            <person name="Kyrpides N."/>
            <person name="Ivanova N."/>
            <person name="Richardson P."/>
        </authorList>
    </citation>
    <scope>NUCLEOTIDE SEQUENCE [LARGE SCALE GENOMIC DNA]</scope>
    <source>
        <strain>CC9902</strain>
    </source>
</reference>
<dbReference type="EC" id="6.3.2.9" evidence="1"/>
<dbReference type="EMBL" id="CP000097">
    <property type="protein sequence ID" value="ABB25492.1"/>
    <property type="molecule type" value="Genomic_DNA"/>
</dbReference>
<dbReference type="RefSeq" id="WP_011359340.1">
    <property type="nucleotide sequence ID" value="NC_007513.1"/>
</dbReference>
<dbReference type="SMR" id="Q3AZI5"/>
<dbReference type="STRING" id="316279.Syncc9902_0524"/>
<dbReference type="KEGG" id="sye:Syncc9902_0524"/>
<dbReference type="eggNOG" id="COG0771">
    <property type="taxonomic scope" value="Bacteria"/>
</dbReference>
<dbReference type="HOGENOM" id="CLU_032540_0_0_3"/>
<dbReference type="OrthoDB" id="9809796at2"/>
<dbReference type="UniPathway" id="UPA00219"/>
<dbReference type="Proteomes" id="UP000002712">
    <property type="component" value="Chromosome"/>
</dbReference>
<dbReference type="GO" id="GO:0005737">
    <property type="term" value="C:cytoplasm"/>
    <property type="evidence" value="ECO:0007669"/>
    <property type="project" value="UniProtKB-SubCell"/>
</dbReference>
<dbReference type="GO" id="GO:0005524">
    <property type="term" value="F:ATP binding"/>
    <property type="evidence" value="ECO:0007669"/>
    <property type="project" value="UniProtKB-UniRule"/>
</dbReference>
<dbReference type="GO" id="GO:0008764">
    <property type="term" value="F:UDP-N-acetylmuramoylalanine-D-glutamate ligase activity"/>
    <property type="evidence" value="ECO:0007669"/>
    <property type="project" value="UniProtKB-UniRule"/>
</dbReference>
<dbReference type="GO" id="GO:0051301">
    <property type="term" value="P:cell division"/>
    <property type="evidence" value="ECO:0007669"/>
    <property type="project" value="UniProtKB-KW"/>
</dbReference>
<dbReference type="GO" id="GO:0071555">
    <property type="term" value="P:cell wall organization"/>
    <property type="evidence" value="ECO:0007669"/>
    <property type="project" value="UniProtKB-KW"/>
</dbReference>
<dbReference type="GO" id="GO:0009252">
    <property type="term" value="P:peptidoglycan biosynthetic process"/>
    <property type="evidence" value="ECO:0007669"/>
    <property type="project" value="UniProtKB-UniRule"/>
</dbReference>
<dbReference type="GO" id="GO:0008360">
    <property type="term" value="P:regulation of cell shape"/>
    <property type="evidence" value="ECO:0007669"/>
    <property type="project" value="UniProtKB-KW"/>
</dbReference>
<dbReference type="Gene3D" id="3.90.190.20">
    <property type="entry name" value="Mur ligase, C-terminal domain"/>
    <property type="match status" value="1"/>
</dbReference>
<dbReference type="Gene3D" id="3.40.1190.10">
    <property type="entry name" value="Mur-like, catalytic domain"/>
    <property type="match status" value="1"/>
</dbReference>
<dbReference type="Gene3D" id="3.40.50.720">
    <property type="entry name" value="NAD(P)-binding Rossmann-like Domain"/>
    <property type="match status" value="1"/>
</dbReference>
<dbReference type="HAMAP" id="MF_00639">
    <property type="entry name" value="MurD"/>
    <property type="match status" value="1"/>
</dbReference>
<dbReference type="InterPro" id="IPR036565">
    <property type="entry name" value="Mur-like_cat_sf"/>
</dbReference>
<dbReference type="InterPro" id="IPR004101">
    <property type="entry name" value="Mur_ligase_C"/>
</dbReference>
<dbReference type="InterPro" id="IPR036615">
    <property type="entry name" value="Mur_ligase_C_dom_sf"/>
</dbReference>
<dbReference type="InterPro" id="IPR013221">
    <property type="entry name" value="Mur_ligase_cen"/>
</dbReference>
<dbReference type="InterPro" id="IPR005762">
    <property type="entry name" value="MurD"/>
</dbReference>
<dbReference type="NCBIfam" id="TIGR01087">
    <property type="entry name" value="murD"/>
    <property type="match status" value="1"/>
</dbReference>
<dbReference type="PANTHER" id="PTHR43692">
    <property type="entry name" value="UDP-N-ACETYLMURAMOYLALANINE--D-GLUTAMATE LIGASE"/>
    <property type="match status" value="1"/>
</dbReference>
<dbReference type="PANTHER" id="PTHR43692:SF1">
    <property type="entry name" value="UDP-N-ACETYLMURAMOYLALANINE--D-GLUTAMATE LIGASE"/>
    <property type="match status" value="1"/>
</dbReference>
<dbReference type="Pfam" id="PF02875">
    <property type="entry name" value="Mur_ligase_C"/>
    <property type="match status" value="1"/>
</dbReference>
<dbReference type="Pfam" id="PF08245">
    <property type="entry name" value="Mur_ligase_M"/>
    <property type="match status" value="1"/>
</dbReference>
<dbReference type="Pfam" id="PF21799">
    <property type="entry name" value="MurD-like_N"/>
    <property type="match status" value="1"/>
</dbReference>
<dbReference type="SUPFAM" id="SSF51984">
    <property type="entry name" value="MurCD N-terminal domain"/>
    <property type="match status" value="1"/>
</dbReference>
<dbReference type="SUPFAM" id="SSF53623">
    <property type="entry name" value="MurD-like peptide ligases, catalytic domain"/>
    <property type="match status" value="1"/>
</dbReference>
<dbReference type="SUPFAM" id="SSF53244">
    <property type="entry name" value="MurD-like peptide ligases, peptide-binding domain"/>
    <property type="match status" value="1"/>
</dbReference>
<gene>
    <name evidence="1" type="primary">murD</name>
    <name type="ordered locus">Syncc9902_0524</name>
</gene>
<name>MURD_SYNS9</name>
<proteinExistence type="inferred from homology"/>
<keyword id="KW-0067">ATP-binding</keyword>
<keyword id="KW-0131">Cell cycle</keyword>
<keyword id="KW-0132">Cell division</keyword>
<keyword id="KW-0133">Cell shape</keyword>
<keyword id="KW-0961">Cell wall biogenesis/degradation</keyword>
<keyword id="KW-0963">Cytoplasm</keyword>
<keyword id="KW-0436">Ligase</keyword>
<keyword id="KW-0547">Nucleotide-binding</keyword>
<keyword id="KW-0573">Peptidoglycan synthesis</keyword>
<keyword id="KW-1185">Reference proteome</keyword>
<sequence length="462" mass="49039">MTLTIVVGLGRSGLGAARLLHHQGQKVVVLERGTGPDQTSCAATLQAEGIQVELGIPLEINSFEPWRSDLDAVVVGPGIPWDHPTLNGLRQEGVQIRGEIELAWEALNDIPWVGITGTNGKTTVTHLLSHVLGHAGIVAPMGGNMGVSAADMALKIRRGETPKPDWLVMELSSYQIEAGPNLAPSIGIWTTLTPDHLERHGTLEAYRAIKHSLLQRSSLAIFNGDDADLSAHRPSLKRGMWVKAAPPCHDDPPADFWIDDAGTVQAREGGAMFPAKVLAMPGAHNRQNLLLVTAAAAQIGLNAEQIAQGLESFPGVPHRLENLGSTSSADVFNDSKATNYDAAAVGLQAMAGPVVVLAGGQTKRGNATGWLAELKSKACAVVLFGAGAEELDALIRQSNYQGQVHRCTDLSAAVAIAVRATSELQASSLLLSPACASFDQYQDFEARGDHFRDLMQPHMHVG</sequence>
<evidence type="ECO:0000255" key="1">
    <source>
        <dbReference type="HAMAP-Rule" id="MF_00639"/>
    </source>
</evidence>
<organism>
    <name type="scientific">Synechococcus sp. (strain CC9902)</name>
    <dbReference type="NCBI Taxonomy" id="316279"/>
    <lineage>
        <taxon>Bacteria</taxon>
        <taxon>Bacillati</taxon>
        <taxon>Cyanobacteriota</taxon>
        <taxon>Cyanophyceae</taxon>
        <taxon>Synechococcales</taxon>
        <taxon>Synechococcaceae</taxon>
        <taxon>Synechococcus</taxon>
    </lineage>
</organism>
<protein>
    <recommendedName>
        <fullName evidence="1">UDP-N-acetylmuramoylalanine--D-glutamate ligase</fullName>
        <ecNumber evidence="1">6.3.2.9</ecNumber>
    </recommendedName>
    <alternativeName>
        <fullName evidence="1">D-glutamic acid-adding enzyme</fullName>
    </alternativeName>
    <alternativeName>
        <fullName evidence="1">UDP-N-acetylmuramoyl-L-alanyl-D-glutamate synthetase</fullName>
    </alternativeName>
</protein>
<feature type="chain" id="PRO_0000257253" description="UDP-N-acetylmuramoylalanine--D-glutamate ligase">
    <location>
        <begin position="1"/>
        <end position="462"/>
    </location>
</feature>
<feature type="binding site" evidence="1">
    <location>
        <begin position="117"/>
        <end position="123"/>
    </location>
    <ligand>
        <name>ATP</name>
        <dbReference type="ChEBI" id="CHEBI:30616"/>
    </ligand>
</feature>
<accession>Q3AZI5</accession>